<feature type="chain" id="PRO_0000266953" description="Probable GTP-binding protein EngB">
    <location>
        <begin position="1"/>
        <end position="211"/>
    </location>
</feature>
<feature type="domain" description="EngB-type G" evidence="1">
    <location>
        <begin position="26"/>
        <end position="200"/>
    </location>
</feature>
<feature type="binding site" evidence="1">
    <location>
        <begin position="34"/>
        <end position="41"/>
    </location>
    <ligand>
        <name>GTP</name>
        <dbReference type="ChEBI" id="CHEBI:37565"/>
    </ligand>
</feature>
<feature type="binding site" evidence="1">
    <location>
        <position position="41"/>
    </location>
    <ligand>
        <name>Mg(2+)</name>
        <dbReference type="ChEBI" id="CHEBI:18420"/>
    </ligand>
</feature>
<feature type="binding site" evidence="1">
    <location>
        <begin position="61"/>
        <end position="65"/>
    </location>
    <ligand>
        <name>GTP</name>
        <dbReference type="ChEBI" id="CHEBI:37565"/>
    </ligand>
</feature>
<feature type="binding site" evidence="1">
    <location>
        <position position="63"/>
    </location>
    <ligand>
        <name>Mg(2+)</name>
        <dbReference type="ChEBI" id="CHEBI:18420"/>
    </ligand>
</feature>
<feature type="binding site" evidence="1">
    <location>
        <begin position="79"/>
        <end position="82"/>
    </location>
    <ligand>
        <name>GTP</name>
        <dbReference type="ChEBI" id="CHEBI:37565"/>
    </ligand>
</feature>
<feature type="binding site" evidence="1">
    <location>
        <begin position="146"/>
        <end position="149"/>
    </location>
    <ligand>
        <name>GTP</name>
        <dbReference type="ChEBI" id="CHEBI:37565"/>
    </ligand>
</feature>
<feature type="binding site" evidence="1">
    <location>
        <begin position="179"/>
        <end position="181"/>
    </location>
    <ligand>
        <name>GTP</name>
        <dbReference type="ChEBI" id="CHEBI:37565"/>
    </ligand>
</feature>
<dbReference type="EMBL" id="AP008232">
    <property type="protein sequence ID" value="BAE75509.1"/>
    <property type="molecule type" value="Genomic_DNA"/>
</dbReference>
<dbReference type="RefSeq" id="WP_011412045.1">
    <property type="nucleotide sequence ID" value="NC_007712.1"/>
</dbReference>
<dbReference type="SMR" id="Q2NQR6"/>
<dbReference type="STRING" id="343509.SG2234"/>
<dbReference type="KEGG" id="sgl:SG2234"/>
<dbReference type="eggNOG" id="COG0218">
    <property type="taxonomic scope" value="Bacteria"/>
</dbReference>
<dbReference type="HOGENOM" id="CLU_033732_1_0_6"/>
<dbReference type="OrthoDB" id="9804921at2"/>
<dbReference type="BioCyc" id="SGLO343509:SGP1_RS20575-MONOMER"/>
<dbReference type="Proteomes" id="UP000001932">
    <property type="component" value="Chromosome"/>
</dbReference>
<dbReference type="GO" id="GO:0005829">
    <property type="term" value="C:cytosol"/>
    <property type="evidence" value="ECO:0007669"/>
    <property type="project" value="TreeGrafter"/>
</dbReference>
<dbReference type="GO" id="GO:0005525">
    <property type="term" value="F:GTP binding"/>
    <property type="evidence" value="ECO:0007669"/>
    <property type="project" value="UniProtKB-UniRule"/>
</dbReference>
<dbReference type="GO" id="GO:0046872">
    <property type="term" value="F:metal ion binding"/>
    <property type="evidence" value="ECO:0007669"/>
    <property type="project" value="UniProtKB-KW"/>
</dbReference>
<dbReference type="GO" id="GO:0000917">
    <property type="term" value="P:division septum assembly"/>
    <property type="evidence" value="ECO:0007669"/>
    <property type="project" value="UniProtKB-KW"/>
</dbReference>
<dbReference type="CDD" id="cd01876">
    <property type="entry name" value="YihA_EngB"/>
    <property type="match status" value="1"/>
</dbReference>
<dbReference type="FunFam" id="3.40.50.300:FF:000098">
    <property type="entry name" value="Probable GTP-binding protein EngB"/>
    <property type="match status" value="1"/>
</dbReference>
<dbReference type="Gene3D" id="3.40.50.300">
    <property type="entry name" value="P-loop containing nucleotide triphosphate hydrolases"/>
    <property type="match status" value="1"/>
</dbReference>
<dbReference type="HAMAP" id="MF_00321">
    <property type="entry name" value="GTPase_EngB"/>
    <property type="match status" value="1"/>
</dbReference>
<dbReference type="InterPro" id="IPR030393">
    <property type="entry name" value="G_ENGB_dom"/>
</dbReference>
<dbReference type="InterPro" id="IPR006073">
    <property type="entry name" value="GTP-bd"/>
</dbReference>
<dbReference type="InterPro" id="IPR019987">
    <property type="entry name" value="GTP-bd_ribosome_bio_YsxC"/>
</dbReference>
<dbReference type="InterPro" id="IPR027417">
    <property type="entry name" value="P-loop_NTPase"/>
</dbReference>
<dbReference type="NCBIfam" id="TIGR03598">
    <property type="entry name" value="GTPase_YsxC"/>
    <property type="match status" value="1"/>
</dbReference>
<dbReference type="PANTHER" id="PTHR11649:SF13">
    <property type="entry name" value="ENGB-TYPE G DOMAIN-CONTAINING PROTEIN"/>
    <property type="match status" value="1"/>
</dbReference>
<dbReference type="PANTHER" id="PTHR11649">
    <property type="entry name" value="MSS1/TRME-RELATED GTP-BINDING PROTEIN"/>
    <property type="match status" value="1"/>
</dbReference>
<dbReference type="Pfam" id="PF01926">
    <property type="entry name" value="MMR_HSR1"/>
    <property type="match status" value="1"/>
</dbReference>
<dbReference type="SUPFAM" id="SSF52540">
    <property type="entry name" value="P-loop containing nucleoside triphosphate hydrolases"/>
    <property type="match status" value="1"/>
</dbReference>
<dbReference type="PROSITE" id="PS51706">
    <property type="entry name" value="G_ENGB"/>
    <property type="match status" value="1"/>
</dbReference>
<sequence length="211" mass="23597">MTKSYNYKLTHFVTSAPDIRHLPVDSGIEIAFAGRSNAGKSSALNTLTNQKSLARTSKTPGRTRLINLFEVESGIRLVDLPGYGYAEVPEELKRKWQRALGEYLQMRDSLKGLVVLMDIRHPMKDLDQQMVQWAVDVNIPVLVLLTKADKLASGSRKEQLNQVREAALAFMGDVQVETFSSLKKQGVDKLRQKLDDWFAAIPPAQGSPETE</sequence>
<protein>
    <recommendedName>
        <fullName evidence="1">Probable GTP-binding protein EngB</fullName>
    </recommendedName>
</protein>
<name>ENGB_SODGM</name>
<evidence type="ECO:0000255" key="1">
    <source>
        <dbReference type="HAMAP-Rule" id="MF_00321"/>
    </source>
</evidence>
<reference key="1">
    <citation type="journal article" date="2006" name="Genome Res.">
        <title>Massive genome erosion and functional adaptations provide insights into the symbiotic lifestyle of Sodalis glossinidius in the tsetse host.</title>
        <authorList>
            <person name="Toh H."/>
            <person name="Weiss B.L."/>
            <person name="Perkin S.A.H."/>
            <person name="Yamashita A."/>
            <person name="Oshima K."/>
            <person name="Hattori M."/>
            <person name="Aksoy S."/>
        </authorList>
    </citation>
    <scope>NUCLEOTIDE SEQUENCE [LARGE SCALE GENOMIC DNA]</scope>
    <source>
        <strain>morsitans</strain>
    </source>
</reference>
<comment type="function">
    <text evidence="1">Necessary for normal cell division and for the maintenance of normal septation.</text>
</comment>
<comment type="cofactor">
    <cofactor evidence="1">
        <name>Mg(2+)</name>
        <dbReference type="ChEBI" id="CHEBI:18420"/>
    </cofactor>
</comment>
<comment type="similarity">
    <text evidence="1">Belongs to the TRAFAC class TrmE-Era-EngA-EngB-Septin-like GTPase superfamily. EngB GTPase family.</text>
</comment>
<accession>Q2NQR6</accession>
<gene>
    <name evidence="1" type="primary">engB</name>
    <name type="ordered locus">SG2234</name>
</gene>
<keyword id="KW-0131">Cell cycle</keyword>
<keyword id="KW-0132">Cell division</keyword>
<keyword id="KW-0342">GTP-binding</keyword>
<keyword id="KW-0460">Magnesium</keyword>
<keyword id="KW-0479">Metal-binding</keyword>
<keyword id="KW-0547">Nucleotide-binding</keyword>
<keyword id="KW-0717">Septation</keyword>
<organism>
    <name type="scientific">Sodalis glossinidius (strain morsitans)</name>
    <dbReference type="NCBI Taxonomy" id="343509"/>
    <lineage>
        <taxon>Bacteria</taxon>
        <taxon>Pseudomonadati</taxon>
        <taxon>Pseudomonadota</taxon>
        <taxon>Gammaproteobacteria</taxon>
        <taxon>Enterobacterales</taxon>
        <taxon>Bruguierivoracaceae</taxon>
        <taxon>Sodalis</taxon>
    </lineage>
</organism>
<proteinExistence type="inferred from homology"/>